<reference key="1">
    <citation type="journal article" date="2005" name="Genomics">
        <title>Trace amine-associated receptors form structurally and functionally distinct subfamilies of novel G protein-coupled receptors.</title>
        <authorList>
            <person name="Lindemann L."/>
            <person name="Ebeling M."/>
            <person name="Kratochwil N.A."/>
            <person name="Bunzow J.R."/>
            <person name="Grandy D.K."/>
            <person name="Hoener M.C."/>
        </authorList>
    </citation>
    <scope>NUCLEOTIDE SEQUENCE [GENOMIC DNA]</scope>
    <source>
        <strain>C57BL/6J</strain>
    </source>
</reference>
<reference key="2">
    <citation type="journal article" date="2004" name="Genome Res.">
        <title>The status, quality, and expansion of the NIH full-length cDNA project: the Mammalian Gene Collection (MGC).</title>
        <authorList>
            <consortium name="The MGC Project Team"/>
        </authorList>
    </citation>
    <scope>NUCLEOTIDE SEQUENCE [LARGE SCALE MRNA]</scope>
    <source>
        <tissue>Brain</tissue>
    </source>
</reference>
<reference key="3">
    <citation type="journal article" date="2006" name="Nature">
        <title>A second class of chemosensory receptors in the olfactory epithelium.</title>
        <authorList>
            <person name="Liberles S.D."/>
            <person name="Buck L.B."/>
        </authorList>
    </citation>
    <scope>TISSUE SPECIFICITY</scope>
</reference>
<reference key="4">
    <citation type="journal article" date="2013" name="Nature">
        <title>Non-redundant coding of aversive odours in the main olfactory pathway.</title>
        <authorList>
            <person name="Dewan A."/>
            <person name="Pacifico R."/>
            <person name="Zhan R."/>
            <person name="Rinberg D."/>
            <person name="Bozza T."/>
        </authorList>
    </citation>
    <scope>DISRUPTION PHENOTYPE</scope>
</reference>
<reference key="5">
    <citation type="journal article" date="2014" name="Int. J. Mol. Sci.">
        <title>Analysis of human TAAR8 and murine Taar8b mediated signaling pathways and expression profile.</title>
        <authorList>
            <person name="Muehlhaus J."/>
            <person name="Dinter J."/>
            <person name="Nuernberg D."/>
            <person name="Rehders M."/>
            <person name="Depke M."/>
            <person name="Golchert J."/>
            <person name="Homuth G."/>
            <person name="Yi C.X."/>
            <person name="Morin S."/>
            <person name="Koehrle J."/>
            <person name="Brix K."/>
            <person name="Tschoep M."/>
            <person name="Kleinau G."/>
            <person name="Biebermann H."/>
        </authorList>
    </citation>
    <scope>FUNCTION</scope>
    <scope>SUBCELLULAR LOCATION</scope>
</reference>
<comment type="function">
    <text evidence="2 7">Olfactory receptor specific for trace amines (By similarity). Trace amine compounds are enriched in animal body fluids and act on trace amine-associated receptors (TAARs) to elicit both intraspecific and interspecific innate behaviors (By similarity). Ligand-binding causes a conformation change that triggers signaling via G alpha proteins, possibly G(i)/G(o) G alpha proteins (PubMed:25391046).</text>
</comment>
<comment type="subcellular location">
    <subcellularLocation>
        <location evidence="7">Cell membrane</location>
        <topology evidence="3">Multi-pass membrane protein</topology>
    </subcellularLocation>
</comment>
<comment type="tissue specificity">
    <text evidence="5">Specifically expressed in neurons of the olfactory epithelium.</text>
</comment>
<comment type="disruption phenotype">
    <text evidence="6">Mice lacking Taar2, Taar3, Taar4, Taar5, Taar6, Taar7a, Taar7b, Taar7d, Taar7e, Taar7f, Taar8a, Taar8b, Taar8c and Taar9 show no visible phenotype or behavioral deficits. They however show an absence of aversion to low concentrations of amines such as 2-phenylethylamine, isopentylamine, N-methylpiperidine and cadaverine.</text>
</comment>
<comment type="similarity">
    <text evidence="4">Belongs to the G-protein coupled receptor 1 family.</text>
</comment>
<protein>
    <recommendedName>
        <fullName evidence="9">Trace amine-associated receptor 8b</fullName>
        <shortName evidence="8">TaR-8b</shortName>
        <shortName evidence="8">Trace amine receptor 8b</shortName>
        <shortName evidence="9">mTaar8b</shortName>
    </recommendedName>
</protein>
<keyword id="KW-1003">Cell membrane</keyword>
<keyword id="KW-1015">Disulfide bond</keyword>
<keyword id="KW-0297">G-protein coupled receptor</keyword>
<keyword id="KW-0325">Glycoprotein</keyword>
<keyword id="KW-0472">Membrane</keyword>
<keyword id="KW-0675">Receptor</keyword>
<keyword id="KW-1185">Reference proteome</keyword>
<keyword id="KW-0807">Transducer</keyword>
<keyword id="KW-0812">Transmembrane</keyword>
<keyword id="KW-1133">Transmembrane helix</keyword>
<organism>
    <name type="scientific">Mus musculus</name>
    <name type="common">Mouse</name>
    <dbReference type="NCBI Taxonomy" id="10090"/>
    <lineage>
        <taxon>Eukaryota</taxon>
        <taxon>Metazoa</taxon>
        <taxon>Chordata</taxon>
        <taxon>Craniata</taxon>
        <taxon>Vertebrata</taxon>
        <taxon>Euteleostomi</taxon>
        <taxon>Mammalia</taxon>
        <taxon>Eutheria</taxon>
        <taxon>Euarchontoglires</taxon>
        <taxon>Glires</taxon>
        <taxon>Rodentia</taxon>
        <taxon>Myomorpha</taxon>
        <taxon>Muroidea</taxon>
        <taxon>Muridae</taxon>
        <taxon>Murinae</taxon>
        <taxon>Mus</taxon>
        <taxon>Mus</taxon>
    </lineage>
</organism>
<sequence>MTSNFSQPALQLCYENTNGSCIKTPYSPGPRVILYMVFGFGAVLAVCGNLLVVISVLHFKQLHSPANFLIASLASADFLVGISVMPFSMVRSIESCWYFGDAFCSLHSCCDVAFCYSSALHLCFISVDRYIAVTDPLVYPTKFTVSVSGICISISWILPLVYSSAVFYTGISAKGIESLVSALNCVGGCQIVVNQDWVLIDFLLFFIPTLVMIILYSKIFLVAKQQAVKIETSVSDNRGESSSESHKARVAKRERKAAKTLGVTVVAFMVSWLPYTIDSLVDAFVGFITPAYVYEICCWSAYYNSAMNPLIYAFFYPWFRKAIKLILSGEILKSHSSTMSLFSE</sequence>
<proteinExistence type="evidence at transcript level"/>
<gene>
    <name evidence="9 10" type="primary">Taar8b</name>
    <name evidence="10" type="synonym">Gm1149</name>
</gene>
<accession>Q5QD06</accession>
<accession>B2RT24</accession>
<evidence type="ECO:0000250" key="1">
    <source>
        <dbReference type="UniProtKB" id="Q5QD04"/>
    </source>
</evidence>
<evidence type="ECO:0000250" key="2">
    <source>
        <dbReference type="UniProtKB" id="Q5QD05"/>
    </source>
</evidence>
<evidence type="ECO:0000255" key="3"/>
<evidence type="ECO:0000255" key="4">
    <source>
        <dbReference type="PROSITE-ProRule" id="PRU00521"/>
    </source>
</evidence>
<evidence type="ECO:0000269" key="5">
    <source>
    </source>
</evidence>
<evidence type="ECO:0000269" key="6">
    <source>
    </source>
</evidence>
<evidence type="ECO:0000269" key="7">
    <source>
    </source>
</evidence>
<evidence type="ECO:0000303" key="8">
    <source>
    </source>
</evidence>
<evidence type="ECO:0000303" key="9">
    <source>
    </source>
</evidence>
<evidence type="ECO:0000312" key="10">
    <source>
        <dbReference type="MGI" id="MGI:2685995"/>
    </source>
</evidence>
<feature type="chain" id="PRO_0000070177" description="Trace amine-associated receptor 8b">
    <location>
        <begin position="1"/>
        <end position="344"/>
    </location>
</feature>
<feature type="topological domain" description="Extracellular" evidence="3">
    <location>
        <begin position="1"/>
        <end position="31"/>
    </location>
</feature>
<feature type="transmembrane region" description="Helical; Name=1" evidence="3">
    <location>
        <begin position="32"/>
        <end position="52"/>
    </location>
</feature>
<feature type="topological domain" description="Cytoplasmic" evidence="3">
    <location>
        <begin position="53"/>
        <end position="67"/>
    </location>
</feature>
<feature type="transmembrane region" description="Helical; Name=2" evidence="3">
    <location>
        <begin position="68"/>
        <end position="88"/>
    </location>
</feature>
<feature type="topological domain" description="Extracellular" evidence="3">
    <location>
        <begin position="89"/>
        <end position="111"/>
    </location>
</feature>
<feature type="transmembrane region" description="Helical; Name=3" evidence="3">
    <location>
        <begin position="112"/>
        <end position="132"/>
    </location>
</feature>
<feature type="topological domain" description="Cytoplasmic" evidence="3">
    <location>
        <begin position="133"/>
        <end position="146"/>
    </location>
</feature>
<feature type="transmembrane region" description="Helical; Name=4" evidence="3">
    <location>
        <begin position="147"/>
        <end position="167"/>
    </location>
</feature>
<feature type="topological domain" description="Extracellular" evidence="3">
    <location>
        <begin position="168"/>
        <end position="195"/>
    </location>
</feature>
<feature type="transmembrane region" description="Helical; Name=5" evidence="3">
    <location>
        <begin position="196"/>
        <end position="216"/>
    </location>
</feature>
<feature type="topological domain" description="Cytoplasmic" evidence="3">
    <location>
        <begin position="217"/>
        <end position="260"/>
    </location>
</feature>
<feature type="transmembrane region" description="Helical; Name=6" evidence="3">
    <location>
        <begin position="261"/>
        <end position="281"/>
    </location>
</feature>
<feature type="topological domain" description="Extracellular" evidence="3">
    <location>
        <position position="282"/>
    </location>
</feature>
<feature type="transmembrane region" description="Helical; Name=7" evidence="3">
    <location>
        <begin position="283"/>
        <end position="303"/>
    </location>
</feature>
<feature type="topological domain" description="Cytoplasmic" evidence="3">
    <location>
        <begin position="304"/>
        <end position="344"/>
    </location>
</feature>
<feature type="glycosylation site" description="N-linked (GlcNAc...) asparagine" evidence="3">
    <location>
        <position position="4"/>
    </location>
</feature>
<feature type="glycosylation site" description="N-linked (GlcNAc...) asparagine" evidence="3">
    <location>
        <position position="18"/>
    </location>
</feature>
<feature type="disulfide bond" evidence="1">
    <location>
        <begin position="21"/>
        <end position="185"/>
    </location>
</feature>
<feature type="disulfide bond" evidence="4">
    <location>
        <begin position="104"/>
        <end position="189"/>
    </location>
</feature>
<name>TAA8B_MOUSE</name>
<dbReference type="EMBL" id="AY702338">
    <property type="protein sequence ID" value="AAV70147.1"/>
    <property type="molecule type" value="Genomic_DNA"/>
</dbReference>
<dbReference type="EMBL" id="BC139105">
    <property type="protein sequence ID" value="AAI39106.1"/>
    <property type="molecule type" value="mRNA"/>
</dbReference>
<dbReference type="EMBL" id="BC139106">
    <property type="protein sequence ID" value="AAI39107.1"/>
    <property type="molecule type" value="mRNA"/>
</dbReference>
<dbReference type="CCDS" id="CCDS23746.1"/>
<dbReference type="RefSeq" id="NP_001010837.1">
    <property type="nucleotide sequence ID" value="NM_001010837.1"/>
</dbReference>
<dbReference type="SMR" id="Q5QD06"/>
<dbReference type="FunCoup" id="Q5QD06">
    <property type="interactions" value="630"/>
</dbReference>
<dbReference type="STRING" id="10090.ENSMUSP00000090324"/>
<dbReference type="GlyCosmos" id="Q5QD06">
    <property type="glycosylation" value="2 sites, No reported glycans"/>
</dbReference>
<dbReference type="GlyGen" id="Q5QD06">
    <property type="glycosylation" value="2 sites"/>
</dbReference>
<dbReference type="PaxDb" id="10090-ENSMUSP00000090324"/>
<dbReference type="DNASU" id="382348"/>
<dbReference type="Ensembl" id="ENSMUST00000092654.4">
    <property type="protein sequence ID" value="ENSMUSP00000090324.3"/>
    <property type="gene ID" value="ENSMUSG00000100186.2"/>
</dbReference>
<dbReference type="GeneID" id="382348"/>
<dbReference type="KEGG" id="mmu:382348"/>
<dbReference type="UCSC" id="uc007eqp.1">
    <property type="organism name" value="mouse"/>
</dbReference>
<dbReference type="AGR" id="MGI:2685995"/>
<dbReference type="CTD" id="382348"/>
<dbReference type="MGI" id="MGI:2685995">
    <property type="gene designation" value="Taar8b"/>
</dbReference>
<dbReference type="VEuPathDB" id="HostDB:ENSMUSG00000100186"/>
<dbReference type="eggNOG" id="KOG3656">
    <property type="taxonomic scope" value="Eukaryota"/>
</dbReference>
<dbReference type="GeneTree" id="ENSGT00940000161306"/>
<dbReference type="HOGENOM" id="CLU_009579_11_0_1"/>
<dbReference type="InParanoid" id="Q5QD06"/>
<dbReference type="OMA" id="LCFICID"/>
<dbReference type="OrthoDB" id="5959645at2759"/>
<dbReference type="PhylomeDB" id="Q5QD06"/>
<dbReference type="TreeFam" id="TF343107"/>
<dbReference type="Reactome" id="R-MMU-375280">
    <property type="pathway name" value="Amine ligand-binding receptors"/>
</dbReference>
<dbReference type="Reactome" id="R-MMU-418555">
    <property type="pathway name" value="G alpha (s) signalling events"/>
</dbReference>
<dbReference type="BioGRID-ORCS" id="382348">
    <property type="hits" value="1 hit in 43 CRISPR screens"/>
</dbReference>
<dbReference type="PRO" id="PR:Q5QD06"/>
<dbReference type="Proteomes" id="UP000000589">
    <property type="component" value="Chromosome 10"/>
</dbReference>
<dbReference type="RNAct" id="Q5QD06">
    <property type="molecule type" value="protein"/>
</dbReference>
<dbReference type="GO" id="GO:0005886">
    <property type="term" value="C:plasma membrane"/>
    <property type="evidence" value="ECO:0000314"/>
    <property type="project" value="UniProtKB"/>
</dbReference>
<dbReference type="GO" id="GO:0001594">
    <property type="term" value="F:trace-amine receptor activity"/>
    <property type="evidence" value="ECO:0007669"/>
    <property type="project" value="InterPro"/>
</dbReference>
<dbReference type="FunFam" id="1.20.1070.10:FF:000030">
    <property type="entry name" value="trace amine-associated receptor 1"/>
    <property type="match status" value="1"/>
</dbReference>
<dbReference type="Gene3D" id="1.20.1070.10">
    <property type="entry name" value="Rhodopsin 7-helix transmembrane proteins"/>
    <property type="match status" value="1"/>
</dbReference>
<dbReference type="InterPro" id="IPR000276">
    <property type="entry name" value="GPCR_Rhodpsn"/>
</dbReference>
<dbReference type="InterPro" id="IPR017452">
    <property type="entry name" value="GPCR_Rhodpsn_7TM"/>
</dbReference>
<dbReference type="InterPro" id="IPR050569">
    <property type="entry name" value="TAAR"/>
</dbReference>
<dbReference type="InterPro" id="IPR009132">
    <property type="entry name" value="TAAR_fam"/>
</dbReference>
<dbReference type="PANTHER" id="PTHR24249">
    <property type="entry name" value="HISTAMINE RECEPTOR-RELATED G-PROTEIN COUPLED RECEPTOR"/>
    <property type="match status" value="1"/>
</dbReference>
<dbReference type="PANTHER" id="PTHR24249:SF405">
    <property type="entry name" value="TRACE AMINE-ASSOCIATED RECEPTOR 8"/>
    <property type="match status" value="1"/>
</dbReference>
<dbReference type="Pfam" id="PF00001">
    <property type="entry name" value="7tm_1"/>
    <property type="match status" value="1"/>
</dbReference>
<dbReference type="PRINTS" id="PR00237">
    <property type="entry name" value="GPCRRHODOPSN"/>
</dbReference>
<dbReference type="PRINTS" id="PR01830">
    <property type="entry name" value="TRACEAMINER"/>
</dbReference>
<dbReference type="SMART" id="SM01381">
    <property type="entry name" value="7TM_GPCR_Srsx"/>
    <property type="match status" value="1"/>
</dbReference>
<dbReference type="SUPFAM" id="SSF81321">
    <property type="entry name" value="Family A G protein-coupled receptor-like"/>
    <property type="match status" value="1"/>
</dbReference>
<dbReference type="PROSITE" id="PS00237">
    <property type="entry name" value="G_PROTEIN_RECEP_F1_1"/>
    <property type="match status" value="1"/>
</dbReference>
<dbReference type="PROSITE" id="PS50262">
    <property type="entry name" value="G_PROTEIN_RECEP_F1_2"/>
    <property type="match status" value="1"/>
</dbReference>